<comment type="function">
    <text evidence="2">Required for the formation of N(7)-methylguanine at position 46 (m7G46) in tRNA, a modification required to maintain stability of tRNAs; its absence resulting in tRNA decay. In the complex, it is required to stabilize and induce conformational changes of the catalytic subunit.</text>
</comment>
<comment type="pathway">
    <text evidence="2">tRNA modification; N(7)-methylguanine-tRNA biosynthesis.</text>
</comment>
<comment type="subunit">
    <text evidence="2">Forms a heterodimer with the catalytic subunit TRM8.</text>
</comment>
<comment type="subcellular location">
    <subcellularLocation>
        <location evidence="2">Nucleus</location>
    </subcellularLocation>
</comment>
<comment type="similarity">
    <text evidence="2">Belongs to the WD repeat TRM82 family.</text>
</comment>
<sequence>MSVIHPLQNLLTSRDGSLVFAIIKNCILSFKYQSPNHWEFAGKWSDDFDKIQESRNTTAKEQQGQSSENENENKKLKSNKGDSIKRTAAKVPSPGLGAPPIYSYIRNLRLTSDESRLIACADSDKSLLVFDVDKTSKNVLKLRKRFCFSKRPNAISIAEDDTTVIIADKFGDVYSIDINSIPEEKFTQEPILGHVSMLTDVHLIKDSDGHQFIITSDRDEHIKISHYPQCFIVDKWLFGHKHFVSSICCGKDYLLLSAGGDDKIFAWDWKTGKNLSTFDYSSLIKPYLNDQHLAPPRFQNENNDIIEFAVSKIIKSKNLPFVAFFVEATKCIIILEMSEKQKGDLALKQIITFPYNVISLSAHNDEFQVTLDNKESSGVQKNFAKFIEYNLNENSFVVNNEKSNEFDSAIIQSVQGDSNLVTKKEEIYPLYNVSSLRKHGEHYS</sequence>
<name>TRM82_YEAS1</name>
<feature type="chain" id="PRO_0000370529" description="tRNA (guanine-N(7)-)-methyltransferase non-catalytic subunit TRM82">
    <location>
        <begin position="1"/>
        <end position="444"/>
    </location>
</feature>
<feature type="repeat" description="WD 1">
    <location>
        <begin position="1"/>
        <end position="47"/>
    </location>
</feature>
<feature type="repeat" description="WD 2">
    <location>
        <begin position="48"/>
        <end position="99"/>
    </location>
</feature>
<feature type="repeat" description="WD 3">
    <location>
        <begin position="100"/>
        <end position="147"/>
    </location>
</feature>
<feature type="repeat" description="WD 4">
    <location>
        <begin position="148"/>
        <end position="192"/>
    </location>
</feature>
<feature type="repeat" description="WD 5">
    <location>
        <begin position="193"/>
        <end position="237"/>
    </location>
</feature>
<feature type="repeat" description="WD 6">
    <location>
        <begin position="238"/>
        <end position="279"/>
    </location>
</feature>
<feature type="repeat" description="WD 7">
    <location>
        <begin position="308"/>
        <end position="354"/>
    </location>
</feature>
<feature type="region of interest" description="Disordered" evidence="3">
    <location>
        <begin position="55"/>
        <end position="92"/>
    </location>
</feature>
<feature type="compositionally biased region" description="Basic and acidic residues" evidence="3">
    <location>
        <begin position="71"/>
        <end position="85"/>
    </location>
</feature>
<feature type="modified residue" description="Phosphoserine" evidence="1">
    <location>
        <position position="93"/>
    </location>
</feature>
<organism>
    <name type="scientific">Saccharomyces cerevisiae (strain RM11-1a)</name>
    <name type="common">Baker's yeast</name>
    <dbReference type="NCBI Taxonomy" id="285006"/>
    <lineage>
        <taxon>Eukaryota</taxon>
        <taxon>Fungi</taxon>
        <taxon>Dikarya</taxon>
        <taxon>Ascomycota</taxon>
        <taxon>Saccharomycotina</taxon>
        <taxon>Saccharomycetes</taxon>
        <taxon>Saccharomycetales</taxon>
        <taxon>Saccharomycetaceae</taxon>
        <taxon>Saccharomyces</taxon>
    </lineage>
</organism>
<reference key="1">
    <citation type="submission" date="2005-03" db="EMBL/GenBank/DDBJ databases">
        <title>Annotation of the Saccharomyces cerevisiae RM11-1a genome.</title>
        <authorList>
            <consortium name="The Broad Institute Genome Sequencing Platform"/>
            <person name="Birren B.W."/>
            <person name="Lander E.S."/>
            <person name="Galagan J.E."/>
            <person name="Nusbaum C."/>
            <person name="Devon K."/>
            <person name="Cuomo C."/>
            <person name="Jaffe D.B."/>
            <person name="Butler J."/>
            <person name="Alvarez P."/>
            <person name="Gnerre S."/>
            <person name="Grabherr M."/>
            <person name="Kleber M."/>
            <person name="Mauceli E.W."/>
            <person name="Brockman W."/>
            <person name="MacCallum I.A."/>
            <person name="Rounsley S."/>
            <person name="Young S.K."/>
            <person name="LaButti K."/>
            <person name="Pushparaj V."/>
            <person name="DeCaprio D."/>
            <person name="Crawford M."/>
            <person name="Koehrsen M."/>
            <person name="Engels R."/>
            <person name="Montgomery P."/>
            <person name="Pearson M."/>
            <person name="Howarth C."/>
            <person name="Larson L."/>
            <person name="Luoma S."/>
            <person name="White J."/>
            <person name="O'Leary S."/>
            <person name="Kodira C.D."/>
            <person name="Zeng Q."/>
            <person name="Yandava C."/>
            <person name="Alvarado L."/>
            <person name="Pratt S."/>
            <person name="Kruglyak L."/>
        </authorList>
    </citation>
    <scope>NUCLEOTIDE SEQUENCE [LARGE SCALE GENOMIC DNA]</scope>
    <source>
        <strain>RM11-1a</strain>
    </source>
</reference>
<proteinExistence type="inferred from homology"/>
<protein>
    <recommendedName>
        <fullName evidence="2">tRNA (guanine-N(7)-)-methyltransferase non-catalytic subunit TRM82</fullName>
    </recommendedName>
    <alternativeName>
        <fullName evidence="2">Transfer RNA methyltransferase 82</fullName>
    </alternativeName>
</protein>
<dbReference type="EMBL" id="CH408043">
    <property type="protein sequence ID" value="EDV08148.1"/>
    <property type="molecule type" value="Genomic_DNA"/>
</dbReference>
<dbReference type="SMR" id="B3LGB9"/>
<dbReference type="HOGENOM" id="CLU_022082_0_0_1"/>
<dbReference type="OrthoDB" id="22935at4893"/>
<dbReference type="UniPathway" id="UPA00989"/>
<dbReference type="Proteomes" id="UP000008335">
    <property type="component" value="Unassembled WGS sequence"/>
</dbReference>
<dbReference type="GO" id="GO:0005829">
    <property type="term" value="C:cytosol"/>
    <property type="evidence" value="ECO:0007669"/>
    <property type="project" value="TreeGrafter"/>
</dbReference>
<dbReference type="GO" id="GO:0005634">
    <property type="term" value="C:nucleus"/>
    <property type="evidence" value="ECO:0007669"/>
    <property type="project" value="UniProtKB-SubCell"/>
</dbReference>
<dbReference type="GO" id="GO:0043527">
    <property type="term" value="C:tRNA methyltransferase complex"/>
    <property type="evidence" value="ECO:0007669"/>
    <property type="project" value="TreeGrafter"/>
</dbReference>
<dbReference type="GO" id="GO:0106004">
    <property type="term" value="P:tRNA (guanine-N7)-methylation"/>
    <property type="evidence" value="ECO:0007669"/>
    <property type="project" value="UniProtKB-UniRule"/>
</dbReference>
<dbReference type="FunFam" id="2.130.10.10:FF:001177">
    <property type="entry name" value="tRNA (guanine-N(7)-)-methyltransferase non-catalytic subunit TRM82"/>
    <property type="match status" value="1"/>
</dbReference>
<dbReference type="Gene3D" id="2.130.10.10">
    <property type="entry name" value="YVTN repeat-like/Quinoprotein amine dehydrogenase"/>
    <property type="match status" value="1"/>
</dbReference>
<dbReference type="HAMAP" id="MF_03056">
    <property type="entry name" value="TRM82"/>
    <property type="match status" value="1"/>
</dbReference>
<dbReference type="InterPro" id="IPR028884">
    <property type="entry name" value="Trm82"/>
</dbReference>
<dbReference type="InterPro" id="IPR015943">
    <property type="entry name" value="WD40/YVTN_repeat-like_dom_sf"/>
</dbReference>
<dbReference type="InterPro" id="IPR036322">
    <property type="entry name" value="WD40_repeat_dom_sf"/>
</dbReference>
<dbReference type="InterPro" id="IPR001680">
    <property type="entry name" value="WD40_rpt"/>
</dbReference>
<dbReference type="PANTHER" id="PTHR16288:SF0">
    <property type="entry name" value="TRNA (GUANINE-N(7)-)-METHYLTRANSFERASE NON-CATALYTIC SUBUNIT WDR4"/>
    <property type="match status" value="1"/>
</dbReference>
<dbReference type="PANTHER" id="PTHR16288">
    <property type="entry name" value="WD40 REPEAT PROTEIN 4"/>
    <property type="match status" value="1"/>
</dbReference>
<dbReference type="SMART" id="SM00320">
    <property type="entry name" value="WD40"/>
    <property type="match status" value="3"/>
</dbReference>
<dbReference type="SUPFAM" id="SSF50978">
    <property type="entry name" value="WD40 repeat-like"/>
    <property type="match status" value="1"/>
</dbReference>
<dbReference type="PROSITE" id="PS50082">
    <property type="entry name" value="WD_REPEATS_2"/>
    <property type="match status" value="1"/>
</dbReference>
<dbReference type="PROSITE" id="PS50294">
    <property type="entry name" value="WD_REPEATS_REGION"/>
    <property type="match status" value="1"/>
</dbReference>
<accession>B3LGB9</accession>
<evidence type="ECO:0000250" key="1">
    <source>
        <dbReference type="UniProtKB" id="Q03774"/>
    </source>
</evidence>
<evidence type="ECO:0000255" key="2">
    <source>
        <dbReference type="HAMAP-Rule" id="MF_03056"/>
    </source>
</evidence>
<evidence type="ECO:0000256" key="3">
    <source>
        <dbReference type="SAM" id="MobiDB-lite"/>
    </source>
</evidence>
<keyword id="KW-0539">Nucleus</keyword>
<keyword id="KW-0597">Phosphoprotein</keyword>
<keyword id="KW-0677">Repeat</keyword>
<keyword id="KW-0819">tRNA processing</keyword>
<keyword id="KW-0853">WD repeat</keyword>
<gene>
    <name evidence="2" type="primary">TRM82</name>
    <name type="ORF">SCRG_00358</name>
</gene>